<gene>
    <name evidence="1" type="primary">serS</name>
    <name type="ordered locus">Pnec_1159</name>
</gene>
<reference key="1">
    <citation type="journal article" date="2013" name="Proc. Natl. Acad. Sci. U.S.A.">
        <title>Polynucleobacter necessarius, a model for genome reduction in both free-living and symbiotic bacteria.</title>
        <authorList>
            <person name="Boscaro V."/>
            <person name="Felletti M."/>
            <person name="Vannini C."/>
            <person name="Ackerman M.S."/>
            <person name="Chain P.S."/>
            <person name="Malfatti S."/>
            <person name="Vergez L.M."/>
            <person name="Shin M."/>
            <person name="Doak T.G."/>
            <person name="Lynch M."/>
            <person name="Petroni G."/>
        </authorList>
    </citation>
    <scope>NUCLEOTIDE SEQUENCE [LARGE SCALE GENOMIC DNA]</scope>
    <source>
        <strain>STIR1</strain>
    </source>
</reference>
<proteinExistence type="inferred from homology"/>
<name>SYS_POLNS</name>
<protein>
    <recommendedName>
        <fullName evidence="1">Serine--tRNA ligase</fullName>
        <ecNumber evidence="1">6.1.1.11</ecNumber>
    </recommendedName>
    <alternativeName>
        <fullName evidence="1">Seryl-tRNA synthetase</fullName>
        <shortName evidence="1">SerRS</shortName>
    </alternativeName>
    <alternativeName>
        <fullName evidence="1">Seryl-tRNA(Ser/Sec) synthetase</fullName>
    </alternativeName>
</protein>
<accession>B1XVE1</accession>
<comment type="function">
    <text evidence="1">Catalyzes the attachment of serine to tRNA(Ser). Is also able to aminoacylate tRNA(Sec) with serine, to form the misacylated tRNA L-seryl-tRNA(Sec), which will be further converted into selenocysteinyl-tRNA(Sec).</text>
</comment>
<comment type="catalytic activity">
    <reaction evidence="1">
        <text>tRNA(Ser) + L-serine + ATP = L-seryl-tRNA(Ser) + AMP + diphosphate + H(+)</text>
        <dbReference type="Rhea" id="RHEA:12292"/>
        <dbReference type="Rhea" id="RHEA-COMP:9669"/>
        <dbReference type="Rhea" id="RHEA-COMP:9703"/>
        <dbReference type="ChEBI" id="CHEBI:15378"/>
        <dbReference type="ChEBI" id="CHEBI:30616"/>
        <dbReference type="ChEBI" id="CHEBI:33019"/>
        <dbReference type="ChEBI" id="CHEBI:33384"/>
        <dbReference type="ChEBI" id="CHEBI:78442"/>
        <dbReference type="ChEBI" id="CHEBI:78533"/>
        <dbReference type="ChEBI" id="CHEBI:456215"/>
        <dbReference type="EC" id="6.1.1.11"/>
    </reaction>
</comment>
<comment type="catalytic activity">
    <reaction evidence="1">
        <text>tRNA(Sec) + L-serine + ATP = L-seryl-tRNA(Sec) + AMP + diphosphate + H(+)</text>
        <dbReference type="Rhea" id="RHEA:42580"/>
        <dbReference type="Rhea" id="RHEA-COMP:9742"/>
        <dbReference type="Rhea" id="RHEA-COMP:10128"/>
        <dbReference type="ChEBI" id="CHEBI:15378"/>
        <dbReference type="ChEBI" id="CHEBI:30616"/>
        <dbReference type="ChEBI" id="CHEBI:33019"/>
        <dbReference type="ChEBI" id="CHEBI:33384"/>
        <dbReference type="ChEBI" id="CHEBI:78442"/>
        <dbReference type="ChEBI" id="CHEBI:78533"/>
        <dbReference type="ChEBI" id="CHEBI:456215"/>
        <dbReference type="EC" id="6.1.1.11"/>
    </reaction>
</comment>
<comment type="pathway">
    <text evidence="1">Aminoacyl-tRNA biosynthesis; selenocysteinyl-tRNA(Sec) biosynthesis; L-seryl-tRNA(Sec) from L-serine and tRNA(Sec): step 1/1.</text>
</comment>
<comment type="subunit">
    <text evidence="1">Homodimer. The tRNA molecule binds across the dimer.</text>
</comment>
<comment type="subcellular location">
    <subcellularLocation>
        <location evidence="1">Cytoplasm</location>
    </subcellularLocation>
</comment>
<comment type="domain">
    <text evidence="1">Consists of two distinct domains, a catalytic core and a N-terminal extension that is involved in tRNA binding.</text>
</comment>
<comment type="similarity">
    <text evidence="1">Belongs to the class-II aminoacyl-tRNA synthetase family. Type-1 seryl-tRNA synthetase subfamily.</text>
</comment>
<sequence length="436" mass="48334">MIDPQLLRKDIAAVAARLATRKFQLDVEKFNALESERKSLQTRTEELQAKRNQLSKAIGMKKGKGEGAAAEMAEVTQVNADMESGSSRLAVLQAEISDFLMGIPNLPDESVPASKDETENKEVKRWGEQPIFDFEVKDHVDLGGPLGLDFEVAAKISGSRFIVLKGPIARLHRALAQFMIDTHATEHQYQEVYAPYMVNAASMRGTGQLPKFEEDLFKVPRQMGGEDGNGEAKTENFYLIPTAEVPVTNLVRDEIVNTDNLPMKFVAHTPCFRSEAGSYGRDVRGMIRQHQFDKVELVQITKPEDSMQALEDLTGHAERILELLELPYRKVLLCTGDMGFGSTKTYDLEVWVPSQNAYREISSCSSMGDFQARRMQARFKVGQGKPELVHTLNGSGLAVGRALVALLENKQQVDGSIAIPKALQPYLGGLEVLKPI</sequence>
<organism>
    <name type="scientific">Polynucleobacter necessarius subsp. necessarius (strain STIR1)</name>
    <dbReference type="NCBI Taxonomy" id="452638"/>
    <lineage>
        <taxon>Bacteria</taxon>
        <taxon>Pseudomonadati</taxon>
        <taxon>Pseudomonadota</taxon>
        <taxon>Betaproteobacteria</taxon>
        <taxon>Burkholderiales</taxon>
        <taxon>Burkholderiaceae</taxon>
        <taxon>Polynucleobacter</taxon>
    </lineage>
</organism>
<dbReference type="EC" id="6.1.1.11" evidence="1"/>
<dbReference type="EMBL" id="CP001010">
    <property type="protein sequence ID" value="ACB44318.1"/>
    <property type="molecule type" value="Genomic_DNA"/>
</dbReference>
<dbReference type="SMR" id="B1XVE1"/>
<dbReference type="STRING" id="452638.Pnec_1159"/>
<dbReference type="KEGG" id="pne:Pnec_1159"/>
<dbReference type="eggNOG" id="COG0172">
    <property type="taxonomic scope" value="Bacteria"/>
</dbReference>
<dbReference type="HOGENOM" id="CLU_023797_1_1_4"/>
<dbReference type="OrthoDB" id="9804647at2"/>
<dbReference type="UniPathway" id="UPA00906">
    <property type="reaction ID" value="UER00895"/>
</dbReference>
<dbReference type="GO" id="GO:0005737">
    <property type="term" value="C:cytoplasm"/>
    <property type="evidence" value="ECO:0007669"/>
    <property type="project" value="UniProtKB-SubCell"/>
</dbReference>
<dbReference type="GO" id="GO:0005524">
    <property type="term" value="F:ATP binding"/>
    <property type="evidence" value="ECO:0007669"/>
    <property type="project" value="UniProtKB-UniRule"/>
</dbReference>
<dbReference type="GO" id="GO:0004828">
    <property type="term" value="F:serine-tRNA ligase activity"/>
    <property type="evidence" value="ECO:0007669"/>
    <property type="project" value="UniProtKB-UniRule"/>
</dbReference>
<dbReference type="GO" id="GO:0016260">
    <property type="term" value="P:selenocysteine biosynthetic process"/>
    <property type="evidence" value="ECO:0007669"/>
    <property type="project" value="UniProtKB-UniRule"/>
</dbReference>
<dbReference type="GO" id="GO:0006434">
    <property type="term" value="P:seryl-tRNA aminoacylation"/>
    <property type="evidence" value="ECO:0007669"/>
    <property type="project" value="UniProtKB-UniRule"/>
</dbReference>
<dbReference type="CDD" id="cd00770">
    <property type="entry name" value="SerRS_core"/>
    <property type="match status" value="1"/>
</dbReference>
<dbReference type="Gene3D" id="3.30.930.10">
    <property type="entry name" value="Bira Bifunctional Protein, Domain 2"/>
    <property type="match status" value="1"/>
</dbReference>
<dbReference type="Gene3D" id="1.10.287.40">
    <property type="entry name" value="Serine-tRNA synthetase, tRNA binding domain"/>
    <property type="match status" value="1"/>
</dbReference>
<dbReference type="HAMAP" id="MF_00176">
    <property type="entry name" value="Ser_tRNA_synth_type1"/>
    <property type="match status" value="1"/>
</dbReference>
<dbReference type="InterPro" id="IPR002314">
    <property type="entry name" value="aa-tRNA-synt_IIb"/>
</dbReference>
<dbReference type="InterPro" id="IPR006195">
    <property type="entry name" value="aa-tRNA-synth_II"/>
</dbReference>
<dbReference type="InterPro" id="IPR045864">
    <property type="entry name" value="aa-tRNA-synth_II/BPL/LPL"/>
</dbReference>
<dbReference type="InterPro" id="IPR002317">
    <property type="entry name" value="Ser-tRNA-ligase_type_1"/>
</dbReference>
<dbReference type="InterPro" id="IPR015866">
    <property type="entry name" value="Ser-tRNA-synth_1_N"/>
</dbReference>
<dbReference type="InterPro" id="IPR042103">
    <property type="entry name" value="SerRS_1_N_sf"/>
</dbReference>
<dbReference type="InterPro" id="IPR033729">
    <property type="entry name" value="SerRS_core"/>
</dbReference>
<dbReference type="InterPro" id="IPR010978">
    <property type="entry name" value="tRNA-bd_arm"/>
</dbReference>
<dbReference type="NCBIfam" id="TIGR00414">
    <property type="entry name" value="serS"/>
    <property type="match status" value="1"/>
</dbReference>
<dbReference type="PANTHER" id="PTHR43697:SF1">
    <property type="entry name" value="SERINE--TRNA LIGASE"/>
    <property type="match status" value="1"/>
</dbReference>
<dbReference type="PANTHER" id="PTHR43697">
    <property type="entry name" value="SERYL-TRNA SYNTHETASE"/>
    <property type="match status" value="1"/>
</dbReference>
<dbReference type="Pfam" id="PF02403">
    <property type="entry name" value="Seryl_tRNA_N"/>
    <property type="match status" value="1"/>
</dbReference>
<dbReference type="Pfam" id="PF00587">
    <property type="entry name" value="tRNA-synt_2b"/>
    <property type="match status" value="1"/>
</dbReference>
<dbReference type="PIRSF" id="PIRSF001529">
    <property type="entry name" value="Ser-tRNA-synth_IIa"/>
    <property type="match status" value="1"/>
</dbReference>
<dbReference type="PRINTS" id="PR00981">
    <property type="entry name" value="TRNASYNTHSER"/>
</dbReference>
<dbReference type="SUPFAM" id="SSF55681">
    <property type="entry name" value="Class II aaRS and biotin synthetases"/>
    <property type="match status" value="1"/>
</dbReference>
<dbReference type="SUPFAM" id="SSF46589">
    <property type="entry name" value="tRNA-binding arm"/>
    <property type="match status" value="1"/>
</dbReference>
<dbReference type="PROSITE" id="PS50862">
    <property type="entry name" value="AA_TRNA_LIGASE_II"/>
    <property type="match status" value="1"/>
</dbReference>
<feature type="chain" id="PRO_1000098107" description="Serine--tRNA ligase">
    <location>
        <begin position="1"/>
        <end position="436"/>
    </location>
</feature>
<feature type="binding site" evidence="1">
    <location>
        <begin position="242"/>
        <end position="244"/>
    </location>
    <ligand>
        <name>L-serine</name>
        <dbReference type="ChEBI" id="CHEBI:33384"/>
    </ligand>
</feature>
<feature type="binding site" evidence="1">
    <location>
        <begin position="273"/>
        <end position="275"/>
    </location>
    <ligand>
        <name>ATP</name>
        <dbReference type="ChEBI" id="CHEBI:30616"/>
    </ligand>
</feature>
<feature type="binding site" evidence="1">
    <location>
        <position position="296"/>
    </location>
    <ligand>
        <name>L-serine</name>
        <dbReference type="ChEBI" id="CHEBI:33384"/>
    </ligand>
</feature>
<feature type="binding site" evidence="1">
    <location>
        <begin position="360"/>
        <end position="363"/>
    </location>
    <ligand>
        <name>ATP</name>
        <dbReference type="ChEBI" id="CHEBI:30616"/>
    </ligand>
</feature>
<feature type="binding site" evidence="1">
    <location>
        <position position="395"/>
    </location>
    <ligand>
        <name>L-serine</name>
        <dbReference type="ChEBI" id="CHEBI:33384"/>
    </ligand>
</feature>
<keyword id="KW-0030">Aminoacyl-tRNA synthetase</keyword>
<keyword id="KW-0067">ATP-binding</keyword>
<keyword id="KW-0963">Cytoplasm</keyword>
<keyword id="KW-0436">Ligase</keyword>
<keyword id="KW-0547">Nucleotide-binding</keyword>
<keyword id="KW-0648">Protein biosynthesis</keyword>
<evidence type="ECO:0000255" key="1">
    <source>
        <dbReference type="HAMAP-Rule" id="MF_00176"/>
    </source>
</evidence>